<comment type="subunit">
    <text evidence="1">Part of the 50S ribosomal subunit.</text>
</comment>
<comment type="similarity">
    <text evidence="1">Belongs to the universal ribosomal protein uL30 family.</text>
</comment>
<reference key="1">
    <citation type="submission" date="2007-03" db="EMBL/GenBank/DDBJ databases">
        <title>Complete sequence of Prosthecochloris vibrioformis DSM 265.</title>
        <authorList>
            <consortium name="US DOE Joint Genome Institute"/>
            <person name="Copeland A."/>
            <person name="Lucas S."/>
            <person name="Lapidus A."/>
            <person name="Barry K."/>
            <person name="Detter J.C."/>
            <person name="Glavina del Rio T."/>
            <person name="Hammon N."/>
            <person name="Israni S."/>
            <person name="Pitluck S."/>
            <person name="Schmutz J."/>
            <person name="Larimer F."/>
            <person name="Land M."/>
            <person name="Hauser L."/>
            <person name="Mikhailova N."/>
            <person name="Li T."/>
            <person name="Overmann J."/>
            <person name="Schuster S.C."/>
            <person name="Bryant D.A."/>
            <person name="Richardson P."/>
        </authorList>
    </citation>
    <scope>NUCLEOTIDE SEQUENCE [LARGE SCALE GENOMIC DNA]</scope>
    <source>
        <strain>DSM 265 / 1930</strain>
    </source>
</reference>
<proteinExistence type="inferred from homology"/>
<sequence>MSEKKIKITQVRSIIGGTRKQKATIQALGLGRPNYSVEKKDNACTKGQIRVVQHLVKVEEV</sequence>
<accession>A4SCS7</accession>
<dbReference type="EMBL" id="CP000607">
    <property type="protein sequence ID" value="ABP36286.1"/>
    <property type="molecule type" value="Genomic_DNA"/>
</dbReference>
<dbReference type="SMR" id="A4SCS7"/>
<dbReference type="STRING" id="290318.Cvib_0264"/>
<dbReference type="KEGG" id="pvi:Cvib_0264"/>
<dbReference type="eggNOG" id="COG1841">
    <property type="taxonomic scope" value="Bacteria"/>
</dbReference>
<dbReference type="HOGENOM" id="CLU_131047_2_0_10"/>
<dbReference type="OrthoDB" id="9812790at2"/>
<dbReference type="GO" id="GO:0022625">
    <property type="term" value="C:cytosolic large ribosomal subunit"/>
    <property type="evidence" value="ECO:0007669"/>
    <property type="project" value="TreeGrafter"/>
</dbReference>
<dbReference type="GO" id="GO:0003735">
    <property type="term" value="F:structural constituent of ribosome"/>
    <property type="evidence" value="ECO:0007669"/>
    <property type="project" value="InterPro"/>
</dbReference>
<dbReference type="GO" id="GO:0006412">
    <property type="term" value="P:translation"/>
    <property type="evidence" value="ECO:0007669"/>
    <property type="project" value="UniProtKB-UniRule"/>
</dbReference>
<dbReference type="CDD" id="cd01658">
    <property type="entry name" value="Ribosomal_L30"/>
    <property type="match status" value="1"/>
</dbReference>
<dbReference type="Gene3D" id="3.30.1390.20">
    <property type="entry name" value="Ribosomal protein L30, ferredoxin-like fold domain"/>
    <property type="match status" value="1"/>
</dbReference>
<dbReference type="HAMAP" id="MF_01371_B">
    <property type="entry name" value="Ribosomal_uL30_B"/>
    <property type="match status" value="1"/>
</dbReference>
<dbReference type="InterPro" id="IPR036919">
    <property type="entry name" value="Ribo_uL30_ferredoxin-like_sf"/>
</dbReference>
<dbReference type="InterPro" id="IPR005996">
    <property type="entry name" value="Ribosomal_uL30_bac-type"/>
</dbReference>
<dbReference type="InterPro" id="IPR016082">
    <property type="entry name" value="Ribosomal_uL30_ferredoxin-like"/>
</dbReference>
<dbReference type="NCBIfam" id="TIGR01308">
    <property type="entry name" value="rpmD_bact"/>
    <property type="match status" value="1"/>
</dbReference>
<dbReference type="PANTHER" id="PTHR15892:SF2">
    <property type="entry name" value="LARGE RIBOSOMAL SUBUNIT PROTEIN UL30M"/>
    <property type="match status" value="1"/>
</dbReference>
<dbReference type="PANTHER" id="PTHR15892">
    <property type="entry name" value="MITOCHONDRIAL RIBOSOMAL PROTEIN L30"/>
    <property type="match status" value="1"/>
</dbReference>
<dbReference type="Pfam" id="PF00327">
    <property type="entry name" value="Ribosomal_L30"/>
    <property type="match status" value="1"/>
</dbReference>
<dbReference type="PIRSF" id="PIRSF002211">
    <property type="entry name" value="Ribosomal_L30_bac-type"/>
    <property type="match status" value="1"/>
</dbReference>
<dbReference type="SUPFAM" id="SSF55129">
    <property type="entry name" value="Ribosomal protein L30p/L7e"/>
    <property type="match status" value="1"/>
</dbReference>
<evidence type="ECO:0000255" key="1">
    <source>
        <dbReference type="HAMAP-Rule" id="MF_01371"/>
    </source>
</evidence>
<evidence type="ECO:0000305" key="2"/>
<feature type="chain" id="PRO_1000087258" description="Large ribosomal subunit protein uL30">
    <location>
        <begin position="1"/>
        <end position="61"/>
    </location>
</feature>
<keyword id="KW-0687">Ribonucleoprotein</keyword>
<keyword id="KW-0689">Ribosomal protein</keyword>
<name>RL30_CHLPM</name>
<organism>
    <name type="scientific">Chlorobium phaeovibrioides (strain DSM 265 / 1930)</name>
    <name type="common">Prosthecochloris vibrioformis (strain DSM 265)</name>
    <dbReference type="NCBI Taxonomy" id="290318"/>
    <lineage>
        <taxon>Bacteria</taxon>
        <taxon>Pseudomonadati</taxon>
        <taxon>Chlorobiota</taxon>
        <taxon>Chlorobiia</taxon>
        <taxon>Chlorobiales</taxon>
        <taxon>Chlorobiaceae</taxon>
        <taxon>Chlorobium/Pelodictyon group</taxon>
        <taxon>Chlorobium</taxon>
    </lineage>
</organism>
<protein>
    <recommendedName>
        <fullName evidence="1">Large ribosomal subunit protein uL30</fullName>
    </recommendedName>
    <alternativeName>
        <fullName evidence="2">50S ribosomal protein L30</fullName>
    </alternativeName>
</protein>
<gene>
    <name evidence="1" type="primary">rpmD</name>
    <name type="ordered locus">Cvib_0264</name>
</gene>